<keyword id="KW-0145">Chemotaxis</keyword>
<keyword id="KW-0807">Transducer</keyword>
<proteinExistence type="predicted"/>
<gene>
    <name type="primary">frzB</name>
</gene>
<organism>
    <name type="scientific">Myxococcus xanthus</name>
    <dbReference type="NCBI Taxonomy" id="34"/>
    <lineage>
        <taxon>Bacteria</taxon>
        <taxon>Pseudomonadati</taxon>
        <taxon>Myxococcota</taxon>
        <taxon>Myxococcia</taxon>
        <taxon>Myxococcales</taxon>
        <taxon>Cystobacterineae</taxon>
        <taxon>Myxococcaceae</taxon>
        <taxon>Myxococcus</taxon>
    </lineage>
</organism>
<accession>P43499</accession>
<feature type="chain" id="PRO_0000087351" description="Frizzy aggregation protein FrzB">
    <location>
        <begin position="1"/>
        <end position="112"/>
    </location>
</feature>
<protein>
    <recommendedName>
        <fullName>Frizzy aggregation protein FrzB</fullName>
    </recommendedName>
</protein>
<dbReference type="EMBL" id="J04157">
    <property type="protein sequence ID" value="AAA25394.1"/>
    <property type="molecule type" value="Genomic_DNA"/>
</dbReference>
<dbReference type="PIR" id="B32185">
    <property type="entry name" value="B32185"/>
</dbReference>
<dbReference type="SMR" id="P43499"/>
<dbReference type="OMA" id="GLPHKGH"/>
<dbReference type="GO" id="GO:0006935">
    <property type="term" value="P:chemotaxis"/>
    <property type="evidence" value="ECO:0007669"/>
    <property type="project" value="UniProtKB-KW"/>
</dbReference>
<dbReference type="GO" id="GO:0007165">
    <property type="term" value="P:signal transduction"/>
    <property type="evidence" value="ECO:0007669"/>
    <property type="project" value="UniProtKB-KW"/>
</dbReference>
<dbReference type="InterPro" id="IPR036061">
    <property type="entry name" value="CheW-like_dom_sf"/>
</dbReference>
<dbReference type="InterPro" id="IPR002545">
    <property type="entry name" value="CheW-lke_dom"/>
</dbReference>
<dbReference type="SMART" id="SM00260">
    <property type="entry name" value="CheW"/>
    <property type="match status" value="1"/>
</dbReference>
<dbReference type="SUPFAM" id="SSF50341">
    <property type="entry name" value="CheW-like"/>
    <property type="match status" value="1"/>
</dbReference>
<reference key="1">
    <citation type="journal article" date="1989" name="Proc. Natl. Acad. Sci. U.S.A.">
        <title>'Frizzy' aggregation genes of the gliding bacterium Myxococcus xanthus show sequence similarities to the chemotaxis genes of enteric bacteria.</title>
        <authorList>
            <person name="McBride M.J."/>
            <person name="Weinberg R.A."/>
            <person name="Zusman D.R."/>
        </authorList>
    </citation>
    <scope>NUCLEOTIDE SEQUENCE [GENOMIC DNA]</scope>
</reference>
<sequence>MDLLFFDIGATLYGTDASQVLRIDRALPEDLTLAELGLPHRGNRAIVFDTPEGEAHLKVDAVHGVRSIPVNSLRRMPPTAGAAAYAVGVCLEEARTVLLIDLVETARTQGRH</sequence>
<comment type="function">
    <text>Necessary for proper aggregation of cells to form fruiting bodies. FRZ genes define a system of signal transduction analogous to the enterobacterial chemotaxis systems.</text>
</comment>
<name>FRZB_MYXXA</name>